<gene>
    <name type="primary">ME1</name>
</gene>
<feature type="chain" id="PRO_0000160196" description="NADP-dependent malic enzyme">
    <location>
        <begin position="1"/>
        <end position="557"/>
    </location>
</feature>
<feature type="active site" description="Proton donor" evidence="1">
    <location>
        <position position="91"/>
    </location>
</feature>
<feature type="active site" description="Proton acceptor" evidence="1">
    <location>
        <position position="162"/>
    </location>
</feature>
<feature type="binding site" evidence="1">
    <location>
        <position position="144"/>
    </location>
    <ligand>
        <name>NADP(+)</name>
        <dbReference type="ChEBI" id="CHEBI:58349"/>
    </ligand>
</feature>
<feature type="binding site" evidence="1">
    <location>
        <position position="234"/>
    </location>
    <ligand>
        <name>a divalent metal cation</name>
        <dbReference type="ChEBI" id="CHEBI:60240"/>
    </ligand>
</feature>
<feature type="binding site" evidence="1">
    <location>
        <position position="235"/>
    </location>
    <ligand>
        <name>a divalent metal cation</name>
        <dbReference type="ChEBI" id="CHEBI:60240"/>
    </ligand>
</feature>
<feature type="binding site" evidence="1">
    <location>
        <position position="258"/>
    </location>
    <ligand>
        <name>a divalent metal cation</name>
        <dbReference type="ChEBI" id="CHEBI:60240"/>
    </ligand>
</feature>
<feature type="binding site" evidence="1">
    <location>
        <position position="258"/>
    </location>
    <ligand>
        <name>NADP(+)</name>
        <dbReference type="ChEBI" id="CHEBI:58349"/>
    </ligand>
</feature>
<feature type="binding site" evidence="1">
    <location>
        <begin position="290"/>
        <end position="307"/>
    </location>
    <ligand>
        <name>NADP(+)</name>
        <dbReference type="ChEBI" id="CHEBI:58349"/>
    </ligand>
</feature>
<feature type="binding site" evidence="1">
    <location>
        <position position="397"/>
    </location>
    <ligand>
        <name>NADP(+)</name>
        <dbReference type="ChEBI" id="CHEBI:58349"/>
    </ligand>
</feature>
<feature type="site" description="Important for activity" evidence="1">
    <location>
        <position position="258"/>
    </location>
</feature>
<protein>
    <recommendedName>
        <fullName>NADP-dependent malic enzyme</fullName>
        <shortName>NADP-ME</shortName>
        <ecNumber>1.1.1.40</ecNumber>
    </recommendedName>
</protein>
<name>MAOX_ANAPL</name>
<comment type="catalytic activity">
    <reaction>
        <text>(S)-malate + NADP(+) = pyruvate + CO2 + NADPH</text>
        <dbReference type="Rhea" id="RHEA:18253"/>
        <dbReference type="ChEBI" id="CHEBI:15361"/>
        <dbReference type="ChEBI" id="CHEBI:15589"/>
        <dbReference type="ChEBI" id="CHEBI:16526"/>
        <dbReference type="ChEBI" id="CHEBI:57783"/>
        <dbReference type="ChEBI" id="CHEBI:58349"/>
        <dbReference type="EC" id="1.1.1.40"/>
    </reaction>
</comment>
<comment type="catalytic activity">
    <reaction>
        <text>oxaloacetate + H(+) = pyruvate + CO2</text>
        <dbReference type="Rhea" id="RHEA:15641"/>
        <dbReference type="ChEBI" id="CHEBI:15361"/>
        <dbReference type="ChEBI" id="CHEBI:15378"/>
        <dbReference type="ChEBI" id="CHEBI:16452"/>
        <dbReference type="ChEBI" id="CHEBI:16526"/>
        <dbReference type="EC" id="1.1.1.40"/>
    </reaction>
</comment>
<comment type="cofactor">
    <cofactor evidence="2">
        <name>Mg(2+)</name>
        <dbReference type="ChEBI" id="CHEBI:18420"/>
    </cofactor>
    <cofactor evidence="2">
        <name>Mn(2+)</name>
        <dbReference type="ChEBI" id="CHEBI:29035"/>
    </cofactor>
    <text evidence="2">Divalent metal cations. Prefers magnesium or manganese.</text>
</comment>
<comment type="subunit">
    <text>Homotetramer.</text>
</comment>
<comment type="subcellular location">
    <subcellularLocation>
        <location>Cytoplasm</location>
    </subcellularLocation>
</comment>
<comment type="similarity">
    <text evidence="3">Belongs to the malic enzymes family.</text>
</comment>
<organism>
    <name type="scientific">Anas platyrhynchos</name>
    <name type="common">Mallard</name>
    <name type="synonym">Anas boschas</name>
    <dbReference type="NCBI Taxonomy" id="8839"/>
    <lineage>
        <taxon>Eukaryota</taxon>
        <taxon>Metazoa</taxon>
        <taxon>Chordata</taxon>
        <taxon>Craniata</taxon>
        <taxon>Vertebrata</taxon>
        <taxon>Euteleostomi</taxon>
        <taxon>Archelosauria</taxon>
        <taxon>Archosauria</taxon>
        <taxon>Dinosauria</taxon>
        <taxon>Saurischia</taxon>
        <taxon>Theropoda</taxon>
        <taxon>Coelurosauria</taxon>
        <taxon>Aves</taxon>
        <taxon>Neognathae</taxon>
        <taxon>Galloanserae</taxon>
        <taxon>Anseriformes</taxon>
        <taxon>Anatidae</taxon>
        <taxon>Anatinae</taxon>
        <taxon>Anas</taxon>
    </lineage>
</organism>
<accession>P28227</accession>
<proteinExistence type="evidence at protein level"/>
<keyword id="KW-0963">Cytoplasm</keyword>
<keyword id="KW-0903">Direct protein sequencing</keyword>
<keyword id="KW-0479">Metal-binding</keyword>
<keyword id="KW-0521">NADP</keyword>
<keyword id="KW-0560">Oxidoreductase</keyword>
<evidence type="ECO:0000250" key="1"/>
<evidence type="ECO:0000269" key="2">
    <source>
    </source>
</evidence>
<evidence type="ECO:0000305" key="3"/>
<reference key="1">
    <citation type="journal article" date="1992" name="Biochem. J.">
        <title>Duck liver 'malic' enzyme. Expression in Escherichia coli and characterization of the wild-type enzyme and site-directed mutants.</title>
        <authorList>
            <person name="Hsu R.Y."/>
            <person name="Glynias M.J."/>
            <person name="Satterlee J.D."/>
            <person name="Feeney R."/>
            <person name="Clarke A.R."/>
            <person name="Emery D.S."/>
            <person name="Roe B.A."/>
            <person name="Wilson R.K."/>
            <person name="Goodridge A.G."/>
            <person name="Holbrook J.J."/>
        </authorList>
    </citation>
    <scope>NUCLEOTIDE SEQUENCE [MRNA]</scope>
    <scope>CHARACTERIZATION</scope>
    <scope>COFACTOR</scope>
    <source>
        <tissue>Liver</tissue>
    </source>
</reference>
<reference key="2">
    <citation type="journal article" date="1991" name="Biochim. Biophys. Acta">
        <title>Duck liver malic enzyme: sequence of a tryptic peptide containing the cysteine residue labeled by the substrate analog bromopyruvate.</title>
        <authorList>
            <person name="Satterlee J.D."/>
            <person name="Hsu R.Y."/>
        </authorList>
    </citation>
    <scope>PROTEIN SEQUENCE OF 86-107</scope>
    <source>
        <tissue>Liver</tissue>
    </source>
</reference>
<dbReference type="EC" id="1.1.1.40"/>
<dbReference type="EMBL" id="X66418">
    <property type="protein sequence ID" value="CAA47049.1"/>
    <property type="molecule type" value="mRNA"/>
</dbReference>
<dbReference type="PIR" id="S23435">
    <property type="entry name" value="S23435"/>
</dbReference>
<dbReference type="RefSeq" id="XP_005024853.1">
    <property type="nucleotide sequence ID" value="XM_005024796.2"/>
</dbReference>
<dbReference type="SMR" id="P28227"/>
<dbReference type="SABIO-RK" id="P28227"/>
<dbReference type="Proteomes" id="UP000694400">
    <property type="component" value="Unplaced"/>
</dbReference>
<dbReference type="GO" id="GO:0005739">
    <property type="term" value="C:mitochondrion"/>
    <property type="evidence" value="ECO:0007669"/>
    <property type="project" value="TreeGrafter"/>
</dbReference>
<dbReference type="GO" id="GO:0004473">
    <property type="term" value="F:malate dehydrogenase (decarboxylating) (NADP+) activity"/>
    <property type="evidence" value="ECO:0007669"/>
    <property type="project" value="UniProtKB-EC"/>
</dbReference>
<dbReference type="GO" id="GO:0046872">
    <property type="term" value="F:metal ion binding"/>
    <property type="evidence" value="ECO:0007669"/>
    <property type="project" value="UniProtKB-KW"/>
</dbReference>
<dbReference type="GO" id="GO:0051287">
    <property type="term" value="F:NAD binding"/>
    <property type="evidence" value="ECO:0007669"/>
    <property type="project" value="InterPro"/>
</dbReference>
<dbReference type="GO" id="GO:0008948">
    <property type="term" value="F:oxaloacetate decarboxylase activity"/>
    <property type="evidence" value="ECO:0007669"/>
    <property type="project" value="RHEA"/>
</dbReference>
<dbReference type="GO" id="GO:0006108">
    <property type="term" value="P:malate metabolic process"/>
    <property type="evidence" value="ECO:0007669"/>
    <property type="project" value="TreeGrafter"/>
</dbReference>
<dbReference type="CDD" id="cd05312">
    <property type="entry name" value="NAD_bind_1_malic_enz"/>
    <property type="match status" value="1"/>
</dbReference>
<dbReference type="FunFam" id="3.40.50.10380:FF:000004">
    <property type="entry name" value="Malic enzyme"/>
    <property type="match status" value="1"/>
</dbReference>
<dbReference type="FunFam" id="3.40.50.720:FF:000060">
    <property type="entry name" value="Malic enzyme"/>
    <property type="match status" value="1"/>
</dbReference>
<dbReference type="Gene3D" id="3.40.50.10380">
    <property type="entry name" value="Malic enzyme, N-terminal domain"/>
    <property type="match status" value="1"/>
</dbReference>
<dbReference type="Gene3D" id="3.40.50.720">
    <property type="entry name" value="NAD(P)-binding Rossmann-like Domain"/>
    <property type="match status" value="1"/>
</dbReference>
<dbReference type="InterPro" id="IPR046346">
    <property type="entry name" value="Aminoacid_DH-like_N_sf"/>
</dbReference>
<dbReference type="InterPro" id="IPR015884">
    <property type="entry name" value="Malic_enzyme_CS"/>
</dbReference>
<dbReference type="InterPro" id="IPR012301">
    <property type="entry name" value="Malic_N_dom"/>
</dbReference>
<dbReference type="InterPro" id="IPR037062">
    <property type="entry name" value="Malic_N_dom_sf"/>
</dbReference>
<dbReference type="InterPro" id="IPR012302">
    <property type="entry name" value="Malic_NAD-bd"/>
</dbReference>
<dbReference type="InterPro" id="IPR001891">
    <property type="entry name" value="Malic_OxRdtase"/>
</dbReference>
<dbReference type="InterPro" id="IPR036291">
    <property type="entry name" value="NAD(P)-bd_dom_sf"/>
</dbReference>
<dbReference type="NCBIfam" id="NF010052">
    <property type="entry name" value="PRK13529.1"/>
    <property type="match status" value="1"/>
</dbReference>
<dbReference type="PANTHER" id="PTHR23406">
    <property type="entry name" value="MALIC ENZYME-RELATED"/>
    <property type="match status" value="1"/>
</dbReference>
<dbReference type="PANTHER" id="PTHR23406:SF17">
    <property type="entry name" value="NADP-DEPENDENT MALIC ENZYME"/>
    <property type="match status" value="1"/>
</dbReference>
<dbReference type="Pfam" id="PF00390">
    <property type="entry name" value="malic"/>
    <property type="match status" value="1"/>
</dbReference>
<dbReference type="Pfam" id="PF03949">
    <property type="entry name" value="Malic_M"/>
    <property type="match status" value="1"/>
</dbReference>
<dbReference type="PIRSF" id="PIRSF000106">
    <property type="entry name" value="ME"/>
    <property type="match status" value="1"/>
</dbReference>
<dbReference type="PRINTS" id="PR00072">
    <property type="entry name" value="MALOXRDTASE"/>
</dbReference>
<dbReference type="SMART" id="SM01274">
    <property type="entry name" value="malic"/>
    <property type="match status" value="1"/>
</dbReference>
<dbReference type="SMART" id="SM00919">
    <property type="entry name" value="Malic_M"/>
    <property type="match status" value="1"/>
</dbReference>
<dbReference type="SUPFAM" id="SSF53223">
    <property type="entry name" value="Aminoacid dehydrogenase-like, N-terminal domain"/>
    <property type="match status" value="1"/>
</dbReference>
<dbReference type="SUPFAM" id="SSF51735">
    <property type="entry name" value="NAD(P)-binding Rossmann-fold domains"/>
    <property type="match status" value="1"/>
</dbReference>
<dbReference type="PROSITE" id="PS00331">
    <property type="entry name" value="MALIC_ENZYMES"/>
    <property type="match status" value="1"/>
</dbReference>
<sequence length="557" mass="61898">MKRGYEVLRDPHLNKGMAFTLEERQQLNIHGLLPPCFLGQDVQVFSILKNFERLTSDLDRYILLMSLQDRNEKLFYKVLTSDIERFMPIVYTPTVGLACQQYGLAFRRPRGLFITIHDRGHIATMLKSWPESVIKAIVVTDGERILGLGDLGCYGMGIPVGKLALYTACGGVKPHECLPVMLDVGTDNEALLKDPLYIGLRHKRIRGQAYDDLLDEFMEAVTSRYGMNCLIQFEDFANANAFRLLHKYRNKYCTFNDDIQGTASVAVAGLLAALRITKNRLSDHTVLFQGAGEAALGIANLIVMAMEKEGVSKEAAVKRIWMVDSKGLIVKGRASLTAEKTRFAHEHAEMKNLEDIVKDIKPSVLIGVAAIGGAFTKEILQDMAAFNKRPIIFALSNPTSKAECTAEQCYKYTEGRGIFASGSPFDPVTLPNGKTLYPGQGNNSYVFPGVALGVIACGLKHIGEDVFLTTAEVIAEQVSEENLQEGRLYPPLVTIQHVSLKIAVRIAEEAYRNNTASTYPQPKDLEAFIQSQIYSTDYNSFVADSYTWPEEAMKVKL</sequence>